<protein>
    <recommendedName>
        <fullName evidence="1">Leucine--tRNA ligase</fullName>
        <ecNumber evidence="1">6.1.1.4</ecNumber>
    </recommendedName>
    <alternativeName>
        <fullName evidence="1">Leucyl-tRNA synthetase</fullName>
        <shortName evidence="1">LeuRS</shortName>
    </alternativeName>
</protein>
<accession>A4T4R2</accession>
<reference key="1">
    <citation type="submission" date="2007-04" db="EMBL/GenBank/DDBJ databases">
        <title>Complete sequence of chromosome of Mycobacterium gilvum PYR-GCK.</title>
        <authorList>
            <consortium name="US DOE Joint Genome Institute"/>
            <person name="Copeland A."/>
            <person name="Lucas S."/>
            <person name="Lapidus A."/>
            <person name="Barry K."/>
            <person name="Detter J.C."/>
            <person name="Glavina del Rio T."/>
            <person name="Hammon N."/>
            <person name="Israni S."/>
            <person name="Dalin E."/>
            <person name="Tice H."/>
            <person name="Pitluck S."/>
            <person name="Chain P."/>
            <person name="Malfatti S."/>
            <person name="Shin M."/>
            <person name="Vergez L."/>
            <person name="Schmutz J."/>
            <person name="Larimer F."/>
            <person name="Land M."/>
            <person name="Hauser L."/>
            <person name="Kyrpides N."/>
            <person name="Mikhailova N."/>
            <person name="Miller C."/>
            <person name="Richardson P."/>
        </authorList>
    </citation>
    <scope>NUCLEOTIDE SEQUENCE [LARGE SCALE GENOMIC DNA]</scope>
    <source>
        <strain>PYR-GCK</strain>
    </source>
</reference>
<proteinExistence type="inferred from homology"/>
<evidence type="ECO:0000255" key="1">
    <source>
        <dbReference type="HAMAP-Rule" id="MF_00049"/>
    </source>
</evidence>
<evidence type="ECO:0000256" key="2">
    <source>
        <dbReference type="SAM" id="MobiDB-lite"/>
    </source>
</evidence>
<dbReference type="EC" id="6.1.1.4" evidence="1"/>
<dbReference type="EMBL" id="CP000656">
    <property type="protein sequence ID" value="ABP43337.1"/>
    <property type="molecule type" value="Genomic_DNA"/>
</dbReference>
<dbReference type="SMR" id="A4T4R2"/>
<dbReference type="STRING" id="350054.Mflv_0853"/>
<dbReference type="KEGG" id="mgi:Mflv_0853"/>
<dbReference type="eggNOG" id="COG0495">
    <property type="taxonomic scope" value="Bacteria"/>
</dbReference>
<dbReference type="HOGENOM" id="CLU_004427_0_0_11"/>
<dbReference type="OrthoDB" id="9810365at2"/>
<dbReference type="GO" id="GO:0005829">
    <property type="term" value="C:cytosol"/>
    <property type="evidence" value="ECO:0007669"/>
    <property type="project" value="TreeGrafter"/>
</dbReference>
<dbReference type="GO" id="GO:0002161">
    <property type="term" value="F:aminoacyl-tRNA deacylase activity"/>
    <property type="evidence" value="ECO:0007669"/>
    <property type="project" value="InterPro"/>
</dbReference>
<dbReference type="GO" id="GO:0005524">
    <property type="term" value="F:ATP binding"/>
    <property type="evidence" value="ECO:0007669"/>
    <property type="project" value="UniProtKB-UniRule"/>
</dbReference>
<dbReference type="GO" id="GO:0004823">
    <property type="term" value="F:leucine-tRNA ligase activity"/>
    <property type="evidence" value="ECO:0007669"/>
    <property type="project" value="UniProtKB-UniRule"/>
</dbReference>
<dbReference type="GO" id="GO:0006429">
    <property type="term" value="P:leucyl-tRNA aminoacylation"/>
    <property type="evidence" value="ECO:0007669"/>
    <property type="project" value="UniProtKB-UniRule"/>
</dbReference>
<dbReference type="CDD" id="cd07958">
    <property type="entry name" value="Anticodon_Ia_Leu_BEm"/>
    <property type="match status" value="1"/>
</dbReference>
<dbReference type="FunFam" id="3.10.20.590:FF:000001">
    <property type="entry name" value="Leucine--tRNA ligase"/>
    <property type="match status" value="1"/>
</dbReference>
<dbReference type="FunFam" id="3.40.50.620:FF:000060">
    <property type="entry name" value="Leucine--tRNA ligase"/>
    <property type="match status" value="1"/>
</dbReference>
<dbReference type="FunFam" id="3.40.50.620:FF:000087">
    <property type="entry name" value="Leucine--tRNA ligase"/>
    <property type="match status" value="1"/>
</dbReference>
<dbReference type="FunFam" id="3.90.740.10:FF:000017">
    <property type="entry name" value="Leucine--tRNA ligase"/>
    <property type="match status" value="1"/>
</dbReference>
<dbReference type="FunFam" id="1.10.730.10:FF:000011">
    <property type="entry name" value="Leucine--tRNA ligase chloroplastic/mitochondrial"/>
    <property type="match status" value="1"/>
</dbReference>
<dbReference type="Gene3D" id="3.40.50.620">
    <property type="entry name" value="HUPs"/>
    <property type="match status" value="2"/>
</dbReference>
<dbReference type="Gene3D" id="1.10.730.10">
    <property type="entry name" value="Isoleucyl-tRNA Synthetase, Domain 1"/>
    <property type="match status" value="1"/>
</dbReference>
<dbReference type="Gene3D" id="3.90.740.10">
    <property type="entry name" value="Valyl/Leucyl/Isoleucyl-tRNA synthetase, editing domain"/>
    <property type="match status" value="1"/>
</dbReference>
<dbReference type="HAMAP" id="MF_00049_B">
    <property type="entry name" value="Leu_tRNA_synth_B"/>
    <property type="match status" value="1"/>
</dbReference>
<dbReference type="InterPro" id="IPR001412">
    <property type="entry name" value="aa-tRNA-synth_I_CS"/>
</dbReference>
<dbReference type="InterPro" id="IPR002302">
    <property type="entry name" value="Leu-tRNA-ligase"/>
</dbReference>
<dbReference type="InterPro" id="IPR025709">
    <property type="entry name" value="Leu_tRNA-synth_edit"/>
</dbReference>
<dbReference type="InterPro" id="IPR013155">
    <property type="entry name" value="M/V/L/I-tRNA-synth_anticd-bd"/>
</dbReference>
<dbReference type="InterPro" id="IPR015413">
    <property type="entry name" value="Methionyl/Leucyl_tRNA_Synth"/>
</dbReference>
<dbReference type="InterPro" id="IPR014729">
    <property type="entry name" value="Rossmann-like_a/b/a_fold"/>
</dbReference>
<dbReference type="InterPro" id="IPR009080">
    <property type="entry name" value="tRNAsynth_Ia_anticodon-bd"/>
</dbReference>
<dbReference type="InterPro" id="IPR009008">
    <property type="entry name" value="Val/Leu/Ile-tRNA-synth_edit"/>
</dbReference>
<dbReference type="NCBIfam" id="TIGR00396">
    <property type="entry name" value="leuS_bact"/>
    <property type="match status" value="1"/>
</dbReference>
<dbReference type="PANTHER" id="PTHR43740:SF2">
    <property type="entry name" value="LEUCINE--TRNA LIGASE, MITOCHONDRIAL"/>
    <property type="match status" value="1"/>
</dbReference>
<dbReference type="PANTHER" id="PTHR43740">
    <property type="entry name" value="LEUCYL-TRNA SYNTHETASE"/>
    <property type="match status" value="1"/>
</dbReference>
<dbReference type="Pfam" id="PF08264">
    <property type="entry name" value="Anticodon_1"/>
    <property type="match status" value="1"/>
</dbReference>
<dbReference type="Pfam" id="PF13603">
    <property type="entry name" value="tRNA-synt_1_2"/>
    <property type="match status" value="1"/>
</dbReference>
<dbReference type="Pfam" id="PF09334">
    <property type="entry name" value="tRNA-synt_1g"/>
    <property type="match status" value="1"/>
</dbReference>
<dbReference type="PRINTS" id="PR00985">
    <property type="entry name" value="TRNASYNTHLEU"/>
</dbReference>
<dbReference type="SUPFAM" id="SSF47323">
    <property type="entry name" value="Anticodon-binding domain of a subclass of class I aminoacyl-tRNA synthetases"/>
    <property type="match status" value="1"/>
</dbReference>
<dbReference type="SUPFAM" id="SSF52374">
    <property type="entry name" value="Nucleotidylyl transferase"/>
    <property type="match status" value="1"/>
</dbReference>
<dbReference type="SUPFAM" id="SSF50677">
    <property type="entry name" value="ValRS/IleRS/LeuRS editing domain"/>
    <property type="match status" value="1"/>
</dbReference>
<dbReference type="PROSITE" id="PS00178">
    <property type="entry name" value="AA_TRNA_LIGASE_I"/>
    <property type="match status" value="1"/>
</dbReference>
<gene>
    <name evidence="1" type="primary">leuS</name>
    <name type="ordered locus">Mflv_0853</name>
</gene>
<organism>
    <name type="scientific">Mycolicibacterium gilvum (strain PYR-GCK)</name>
    <name type="common">Mycobacterium gilvum (strain PYR-GCK)</name>
    <dbReference type="NCBI Taxonomy" id="350054"/>
    <lineage>
        <taxon>Bacteria</taxon>
        <taxon>Bacillati</taxon>
        <taxon>Actinomycetota</taxon>
        <taxon>Actinomycetes</taxon>
        <taxon>Mycobacteriales</taxon>
        <taxon>Mycobacteriaceae</taxon>
        <taxon>Mycolicibacterium</taxon>
    </lineage>
</organism>
<sequence length="949" mass="105013">MTETPIAPLDDTPRFRYTAVLAGEIERAWQQQWADSGTFHVDNPVGSLAPADGSAVPADKMFVQDMFPYPSGEGLHVGHPLGYIATDVYARYYRMTGRNVLHALGFDAFGLPAEQYAIQTGTHPRTRTEANIVNFRRQLGRLGLGHDSRRSFATTDVDYYKWTQWIFLQIFNAWFDTDQNRARPIRELIAEFEAGTRQVGDGRSWADLDAGARADLVDAHRLVYLADSVVNWCPGLGTVLANEEVTADGRSERGNFPVFRKRLRQWMMRITAYSDRLLEDLDVLDWPDKVKTMQRNWIGRSTGAEVQFSTAAGDIEVFTTRPDTLFGATYMVLAPEHDLVDRLVASAWPDGTDARWTFGAATPAEAVAAYRAGIAAKSDLERQENKTKTGVFLGAYATNPANGQQVPVFIADYVLAGYGTGAIMAVPSGDQRDWDFATEFGLPIVEVVAGGDVTVEAYSGDGTMVNSGFLDGMDVATAKQAMTERLVADGRGRARVEYKLRDWLFARQRYWGEPFPVVYDSEGRAHGLPEGMLPVELPDVPDYSPVSFDPDDAGSEPSPPLGKVTDWVNVDLDLGDGLKPYTRDTNVMPQWAGSSWYELRYTDPYNSEALCAKENEAYWMGPRPAEHGPDDPGGVDLYVGGVEHAVLHLLYSRFWHKVLYDLGHVSSREPYRRLVNQGYIQAFAYTDSRGSYVPAAEVIERDGKFVWPGPDGETEVNQEFGKIGKSLKNSVSPDEICDNYGADTLRVYEMSMGPLEASRPWATKDVVGAYRFLQRVWRLVVDENTGETLATEDALDDDTLRLLHRTIAGTADDYASLRNNTAAAKLIEYTNHLTKQSVTARAALEPLVLMVAPLAPHLAEELWKRLGHEGSLAHGPFPLADERYLVEDTVEYPVQVNGKVRGRVTVPADAPADAVEAAALAEEKVVAFLDGRTPKKVIVVAGRLVNVVV</sequence>
<comment type="catalytic activity">
    <reaction evidence="1">
        <text>tRNA(Leu) + L-leucine + ATP = L-leucyl-tRNA(Leu) + AMP + diphosphate</text>
        <dbReference type="Rhea" id="RHEA:11688"/>
        <dbReference type="Rhea" id="RHEA-COMP:9613"/>
        <dbReference type="Rhea" id="RHEA-COMP:9622"/>
        <dbReference type="ChEBI" id="CHEBI:30616"/>
        <dbReference type="ChEBI" id="CHEBI:33019"/>
        <dbReference type="ChEBI" id="CHEBI:57427"/>
        <dbReference type="ChEBI" id="CHEBI:78442"/>
        <dbReference type="ChEBI" id="CHEBI:78494"/>
        <dbReference type="ChEBI" id="CHEBI:456215"/>
        <dbReference type="EC" id="6.1.1.4"/>
    </reaction>
</comment>
<comment type="subcellular location">
    <subcellularLocation>
        <location evidence="1">Cytoplasm</location>
    </subcellularLocation>
</comment>
<comment type="similarity">
    <text evidence="1">Belongs to the class-I aminoacyl-tRNA synthetase family.</text>
</comment>
<feature type="chain" id="PRO_0000334774" description="Leucine--tRNA ligase">
    <location>
        <begin position="1"/>
        <end position="949"/>
    </location>
</feature>
<feature type="region of interest" description="Disordered" evidence="2">
    <location>
        <begin position="540"/>
        <end position="562"/>
    </location>
</feature>
<feature type="short sequence motif" description="'HIGH' region">
    <location>
        <begin position="68"/>
        <end position="79"/>
    </location>
</feature>
<feature type="short sequence motif" description="'KMSKS' region">
    <location>
        <begin position="722"/>
        <end position="726"/>
    </location>
</feature>
<feature type="binding site" evidence="1">
    <location>
        <position position="725"/>
    </location>
    <ligand>
        <name>ATP</name>
        <dbReference type="ChEBI" id="CHEBI:30616"/>
    </ligand>
</feature>
<name>SYL_MYCGI</name>
<keyword id="KW-0030">Aminoacyl-tRNA synthetase</keyword>
<keyword id="KW-0067">ATP-binding</keyword>
<keyword id="KW-0963">Cytoplasm</keyword>
<keyword id="KW-0436">Ligase</keyword>
<keyword id="KW-0547">Nucleotide-binding</keyword>
<keyword id="KW-0648">Protein biosynthesis</keyword>